<keyword id="KW-0025">Alternative splicing</keyword>
<keyword id="KW-0965">Cell junction</keyword>
<keyword id="KW-0966">Cell projection</keyword>
<keyword id="KW-0969">Cilium</keyword>
<keyword id="KW-0970">Cilium biogenesis/degradation</keyword>
<keyword id="KW-0963">Cytoplasm</keyword>
<keyword id="KW-0206">Cytoskeleton</keyword>
<keyword id="KW-0217">Developmental protein</keyword>
<keyword id="KW-0221">Differentiation</keyword>
<keyword id="KW-0597">Phosphoprotein</keyword>
<keyword id="KW-1185">Reference proteome</keyword>
<keyword id="KW-0677">Repeat</keyword>
<keyword id="KW-0728">SH3 domain</keyword>
<keyword id="KW-0853">WD repeat</keyword>
<name>AHI1_MOUSE</name>
<organism>
    <name type="scientific">Mus musculus</name>
    <name type="common">Mouse</name>
    <dbReference type="NCBI Taxonomy" id="10090"/>
    <lineage>
        <taxon>Eukaryota</taxon>
        <taxon>Metazoa</taxon>
        <taxon>Chordata</taxon>
        <taxon>Craniata</taxon>
        <taxon>Vertebrata</taxon>
        <taxon>Euteleostomi</taxon>
        <taxon>Mammalia</taxon>
        <taxon>Eutheria</taxon>
        <taxon>Euarchontoglires</taxon>
        <taxon>Glires</taxon>
        <taxon>Rodentia</taxon>
        <taxon>Myomorpha</taxon>
        <taxon>Muroidea</taxon>
        <taxon>Muridae</taxon>
        <taxon>Murinae</taxon>
        <taxon>Mus</taxon>
        <taxon>Mus</taxon>
    </lineage>
</organism>
<evidence type="ECO:0000250" key="1"/>
<evidence type="ECO:0000250" key="2">
    <source>
        <dbReference type="UniProtKB" id="Q8N157"/>
    </source>
</evidence>
<evidence type="ECO:0000255" key="3">
    <source>
        <dbReference type="PROSITE-ProRule" id="PRU00192"/>
    </source>
</evidence>
<evidence type="ECO:0000256" key="4">
    <source>
        <dbReference type="SAM" id="MobiDB-lite"/>
    </source>
</evidence>
<evidence type="ECO:0000269" key="5">
    <source>
    </source>
</evidence>
<evidence type="ECO:0000269" key="6">
    <source>
    </source>
</evidence>
<evidence type="ECO:0000269" key="7">
    <source>
    </source>
</evidence>
<evidence type="ECO:0000269" key="8">
    <source>
    </source>
</evidence>
<evidence type="ECO:0000269" key="9">
    <source>
    </source>
</evidence>
<evidence type="ECO:0000269" key="10">
    <source>
    </source>
</evidence>
<evidence type="ECO:0000269" key="11">
    <source>
    </source>
</evidence>
<evidence type="ECO:0000269" key="12">
    <source>
    </source>
</evidence>
<evidence type="ECO:0000269" key="13">
    <source>
    </source>
</evidence>
<evidence type="ECO:0000303" key="14">
    <source>
    </source>
</evidence>
<evidence type="ECO:0000305" key="15"/>
<proteinExistence type="evidence at protein level"/>
<comment type="function">
    <text evidence="8 10 11 12">Involved in vesicle trafficking and required for ciliogenesis, formation of primary non-motile cilium, and recruitment of RAB8A to the basal body of primary cilium (PubMed:19625297). Component of the tectonic-like complex, a complex localized at the transition zone of primary cilia and acting as a barrier that prevents diffusion of transmembrane proteins between the cilia and plasma membranes (PubMed:22179047). Involved in neuronal differentiation (PubMed:23658157). As a positive modulator of classical Wnt signaling, may play a crucial role in ciliary signaling during cerebellum embryonic development (PubMed:21623382).</text>
</comment>
<comment type="subunit">
    <text evidence="2 7 8 9 11 12 13">Self-associates (By similarity). Part of the tectonic-like complex (also named B9 complex) (PubMed:22179047). Interacts with MKS1 (PubMed:21565611). Interacts with NPHP1; probably as heterodimers and/or AHI1(2):NPHP1(2) heterotetramers (PubMed:18633336). Interacts (via SH3 domain) with the dynamin GTPase DNM2 (By similarity). Interacts with HAP1; probably as AHI1(2):HAP1(2) heterotetramers (By similarity) (PubMed:23658157). Interacts with RAB8A (PubMed:19625297). Interacts with CEND1 (PubMed:23658157). Interacts with SPATA7 (PubMed:29899041).</text>
</comment>
<comment type="interaction">
    <interactant intactId="EBI-4280729">
        <id>Q8K3E5</id>
    </interactant>
    <interactant intactId="EBI-473704">
        <id>O35668</id>
        <label>Hap1</label>
    </interactant>
    <organismsDiffer>false</organismsDiffer>
    <experiments>3</experiments>
</comment>
<comment type="subcellular location">
    <subcellularLocation>
        <location evidence="7 8 10">Cytoplasm</location>
        <location evidence="7 8 10">Cytoskeleton</location>
        <location evidence="7 8 10">Cilium basal body</location>
    </subcellularLocation>
    <subcellularLocation>
        <location evidence="8">Cytoplasm</location>
        <location evidence="8">Cytoskeleton</location>
        <location evidence="8">Microtubule organizing center</location>
        <location evidence="8">Centrosome</location>
        <location evidence="8">Centriole</location>
    </subcellularLocation>
    <subcellularLocation>
        <location evidence="2">Cell junction</location>
        <location evidence="2">Adherens junction</location>
    </subcellularLocation>
    <text evidence="13">In the retinal photoreceptor cell layer, localizes at the connecting cilium.</text>
</comment>
<comment type="alternative products">
    <event type="alternative splicing"/>
    <isoform>
        <id>Q8K3E5-1</id>
        <name>1</name>
        <sequence type="displayed"/>
    </isoform>
    <isoform>
        <id>Q8K3E5-2</id>
        <name>2</name>
        <sequence type="described" ref="VSP_015357 VSP_015358"/>
    </isoform>
</comment>
<comment type="tissue specificity">
    <text evidence="5 6 13">Expressed in the retina (at protein level) (PubMed:29899041). Highly expressed in the brain (PubMed:12186888, PubMed:15467982). Highly expressed in the testis (PubMed:12186888). Expressed in the kidney, thymus, heart, lung, spleen (PubMed:12186888). Weakly expressed in the liver, stomach, pancreas, and embryo (PubMed:12186888). Strongly expressed during periods of both cortical and cerebellar development (PubMed:15467982).</text>
</comment>
<comment type="developmental stage">
    <text evidence="6">First detected at 7 days post conception (dpc) and is also present at 11 dpc, 15 dpc and 17 dpc with the highest level at 15 dpc. Expression in whole brain is detected from 14 dpc to adult. Expression in cerebellum appears maximal at 18 dpc and postnatal days 5 (P5), whereas expression in cerebral cortex appears maximal at 16 dpc and 18 dpc.</text>
</comment>
<comment type="disruption phenotype">
    <text evidence="10 12">Mutant mice, when surviving after birth, show retarded growth during the postnatal period, but do not develop severe cerebellar vermis hypoplasia or ataxia associated with cerebellar dysfunction (PubMed:23658157). Adult homozygous knockout mice have a small body size, with slightly reduced brain size compared with wild-type and heterozygous littermates. The overall brain morphology appears normal except for a smaller cerebellum and underdeveloped vermis with a mildly defective foliation pattern. Vermian lobules VI and VII appear fused, whereas lobule V appears smaller and underdeveloped at 3 weeks of age. Overall, the cerebellum is slightly hypoplastic (PubMed:21623382).</text>
</comment>
<comment type="miscellaneous">
    <text>Is targeted by provirus integrations. This deregulation contributes to tumor development.</text>
</comment>
<protein>
    <recommendedName>
        <fullName>Jouberin</fullName>
    </recommendedName>
    <alternativeName>
        <fullName>Abelson helper integration site 1 protein</fullName>
        <shortName>AHI-1</shortName>
    </alternativeName>
</protein>
<feature type="chain" id="PRO_0000050839" description="Jouberin">
    <location>
        <begin position="1"/>
        <end position="1047"/>
    </location>
</feature>
<feature type="repeat" description="WD 1">
    <location>
        <begin position="457"/>
        <end position="499"/>
    </location>
</feature>
<feature type="repeat" description="WD 2">
    <location>
        <begin position="502"/>
        <end position="541"/>
    </location>
</feature>
<feature type="repeat" description="WD 3">
    <location>
        <begin position="545"/>
        <end position="585"/>
    </location>
</feature>
<feature type="repeat" description="WD 4">
    <location>
        <begin position="592"/>
        <end position="631"/>
    </location>
</feature>
<feature type="repeat" description="WD 5">
    <location>
        <begin position="648"/>
        <end position="687"/>
    </location>
</feature>
<feature type="repeat" description="WD 6">
    <location>
        <begin position="691"/>
        <end position="730"/>
    </location>
</feature>
<feature type="repeat" description="WD 7">
    <location>
        <begin position="735"/>
        <end position="776"/>
    </location>
</feature>
<feature type="domain" description="SH3" evidence="3">
    <location>
        <begin position="902"/>
        <end position="962"/>
    </location>
</feature>
<feature type="region of interest" description="Interaction with HAP1" evidence="1">
    <location>
        <begin position="1"/>
        <end position="284"/>
    </location>
</feature>
<feature type="region of interest" description="Disordered" evidence="4">
    <location>
        <begin position="1"/>
        <end position="40"/>
    </location>
</feature>
<feature type="region of interest" description="Disordered" evidence="4">
    <location>
        <begin position="67"/>
        <end position="181"/>
    </location>
</feature>
<feature type="region of interest" description="Disordered" evidence="4">
    <location>
        <begin position="963"/>
        <end position="1047"/>
    </location>
</feature>
<feature type="compositionally biased region" description="Basic and acidic residues" evidence="4">
    <location>
        <begin position="1"/>
        <end position="17"/>
    </location>
</feature>
<feature type="compositionally biased region" description="Basic and acidic residues" evidence="4">
    <location>
        <begin position="29"/>
        <end position="40"/>
    </location>
</feature>
<feature type="compositionally biased region" description="Basic and acidic residues" evidence="4">
    <location>
        <begin position="77"/>
        <end position="86"/>
    </location>
</feature>
<feature type="compositionally biased region" description="Low complexity" evidence="4">
    <location>
        <begin position="96"/>
        <end position="106"/>
    </location>
</feature>
<feature type="compositionally biased region" description="Basic and acidic residues" evidence="4">
    <location>
        <begin position="115"/>
        <end position="138"/>
    </location>
</feature>
<feature type="compositionally biased region" description="Basic residues" evidence="4">
    <location>
        <begin position="149"/>
        <end position="159"/>
    </location>
</feature>
<feature type="compositionally biased region" description="Basic and acidic residues" evidence="4">
    <location>
        <begin position="172"/>
        <end position="181"/>
    </location>
</feature>
<feature type="compositionally biased region" description="Basic and acidic residues" evidence="4">
    <location>
        <begin position="963"/>
        <end position="987"/>
    </location>
</feature>
<feature type="compositionally biased region" description="Basic and acidic residues" evidence="4">
    <location>
        <begin position="1013"/>
        <end position="1040"/>
    </location>
</feature>
<feature type="modified residue" description="Phosphoserine" evidence="2">
    <location>
        <position position="853"/>
    </location>
</feature>
<feature type="modified residue" description="Phosphoserine" evidence="2">
    <location>
        <position position="974"/>
    </location>
</feature>
<feature type="splice variant" id="VSP_015357" description="In isoform 2." evidence="14">
    <original>QSLSKGRPLDPR</original>
    <variation>GGHEEETKSQTN</variation>
    <location>
        <begin position="994"/>
        <end position="1005"/>
    </location>
</feature>
<feature type="splice variant" id="VSP_015358" description="In isoform 2." evidence="14">
    <location>
        <begin position="1006"/>
        <end position="1047"/>
    </location>
</feature>
<feature type="sequence conflict" description="In Ref. 1; AAM94175." evidence="15" ref="1">
    <original>Q</original>
    <variation>T</variation>
    <location>
        <position position="48"/>
    </location>
</feature>
<feature type="sequence conflict" description="In Ref. 1; AAM94175." evidence="15" ref="1">
    <original>V</original>
    <variation>L</variation>
    <location>
        <position position="194"/>
    </location>
</feature>
<feature type="sequence conflict" description="In Ref. 3; BAB24355." evidence="15" ref="3">
    <original>QYVKKDDS</original>
    <variation>H</variation>
    <location>
        <begin position="227"/>
        <end position="234"/>
    </location>
</feature>
<feature type="sequence conflict" description="In Ref. 2; AAH55400." evidence="15" ref="2">
    <original>T</original>
    <variation>H</variation>
    <location>
        <position position="632"/>
    </location>
</feature>
<accession>Q8K3E5</accession>
<accession>Q7TNV2</accession>
<accession>Q9CVY1</accession>
<sequence length="1047" mass="119650">MEPETPEKVDSAQEKVRGKTPTADDSDDSREKTGIEEKGELTDAYQLQVAEEMAKEIKKKIRKKLKEQLTYFPPDTLLHDDKLASEKRKKKKKKVPVPTKPESSPSDVCDSAVEGEQKKEGTPEDSQHMEGICSREQDVDATVPENAKPKPKKTKKKTKAVSNDNEDTNGDGVHEITSRDSPVHPKCLLDDDLVMGVYIHRTDRLKSDFMISHPMVKIHVVDEHTGQYVKKDDSERPVSSYYEKDNVDYILPIMTQPYDFKKLKSRLPEWEEQVIFNENFPYLLREFEECPKVILFFEILDFLSMDEIKNNSEVQNQECGFRKIAWAFLKLLGANGNANINSKLRLQLYYPPTKPRSQLNVVEVFEWWSKCPRNRYPSTLYVTVRGLKVPDCIKPSYRSMMALQEERGTPVYCERHRETSSVDTEPGLEDSKEEVKWKRLPGQACRIPNKHLFSLNAGERGCFCLDFSHNGRILAAACASRDGYPIILYEIPSGRFMRELCGHLNIIYDLDWSKDDRYLVTSSSDGTARVWKNEINSTSTFRVLPHPSFVYTAKFHPATRELVVTGCYDSMIRIWKIDAREDAAILVRQLDVHKSFVNSICFDDEGHHMYSGDCIGVIVVWDTYVKVNDVQTSVRHWTINKEIKETEFRGVPISYLEVHPNGKRLLIHTKDSTLRIMDLRILAARKFVGAANYREKIHSTLTPCGTLLFSGSEDGIVYVWNPETGEQVAMYSDLPFKSTIRDISYHPLENMVAFCAFGQSEPILLYIYDFQVAQQEAEMLKRYSGTLPLPGIHQSEDALCTCPKLPQQGSFQIDEFVNTENSSSRKIQLVKQRLETVTEVIRSCAAKVNKNLSMTSPPPGPAKKPRVKQSFVLTTDEIIHQFGLPQTAFISIERGPFVRHVDPPPMVVALYDYTASRSDELTIHRGDIIRVYFKDNEDWWYGSVRKGQEGFFPANHVASETLYRDSPPKVKERSPPLTPKEKTKPEKPLASQKQSLSKGRPLDPRLGPQPVGHSEKGKDQNVEDRGHKVDMETKKSEPVVRKVTLIE</sequence>
<dbReference type="EMBL" id="AY133241">
    <property type="protein sequence ID" value="AAM94175.1"/>
    <property type="molecule type" value="mRNA"/>
</dbReference>
<dbReference type="EMBL" id="BC055400">
    <property type="protein sequence ID" value="AAH55400.1"/>
    <property type="molecule type" value="mRNA"/>
</dbReference>
<dbReference type="EMBL" id="AK005991">
    <property type="protein sequence ID" value="BAB24355.1"/>
    <property type="molecule type" value="mRNA"/>
</dbReference>
<dbReference type="CCDS" id="CCDS35860.1">
    <molecule id="Q8K3E5-1"/>
</dbReference>
<dbReference type="SMR" id="Q8K3E5"/>
<dbReference type="BioGRID" id="206874">
    <property type="interactions" value="35"/>
</dbReference>
<dbReference type="CORUM" id="Q8K3E5"/>
<dbReference type="FunCoup" id="Q8K3E5">
    <property type="interactions" value="375"/>
</dbReference>
<dbReference type="IntAct" id="Q8K3E5">
    <property type="interactions" value="18"/>
</dbReference>
<dbReference type="MINT" id="Q8K3E5"/>
<dbReference type="STRING" id="10090.ENSMUSP00000101164"/>
<dbReference type="GlyGen" id="Q8K3E5">
    <property type="glycosylation" value="2 sites, 1 N-linked glycan (1 site), 1 O-linked glycan (1 site)"/>
</dbReference>
<dbReference type="iPTMnet" id="Q8K3E5"/>
<dbReference type="PhosphoSitePlus" id="Q8K3E5"/>
<dbReference type="PaxDb" id="10090-ENSMUSP00000101164"/>
<dbReference type="ProteomicsDB" id="296142">
    <molecule id="Q8K3E5-1"/>
</dbReference>
<dbReference type="ProteomicsDB" id="296143">
    <molecule id="Q8K3E5-2"/>
</dbReference>
<dbReference type="Pumba" id="Q8K3E5"/>
<dbReference type="AGR" id="MGI:87971"/>
<dbReference type="MGI" id="MGI:87971">
    <property type="gene designation" value="Ahi1"/>
</dbReference>
<dbReference type="eggNOG" id="KOG0266">
    <property type="taxonomic scope" value="Eukaryota"/>
</dbReference>
<dbReference type="InParanoid" id="Q8K3E5"/>
<dbReference type="PhylomeDB" id="Q8K3E5"/>
<dbReference type="Reactome" id="R-MMU-5620912">
    <property type="pathway name" value="Anchoring of the basal body to the plasma membrane"/>
</dbReference>
<dbReference type="ChiTaRS" id="Ahi1">
    <property type="organism name" value="mouse"/>
</dbReference>
<dbReference type="PRO" id="PR:Q8K3E5"/>
<dbReference type="Proteomes" id="UP000000589">
    <property type="component" value="Unplaced"/>
</dbReference>
<dbReference type="RNAct" id="Q8K3E5">
    <property type="molecule type" value="protein"/>
</dbReference>
<dbReference type="GO" id="GO:0005912">
    <property type="term" value="C:adherens junction"/>
    <property type="evidence" value="ECO:0000250"/>
    <property type="project" value="UniProtKB"/>
</dbReference>
<dbReference type="GO" id="GO:0005911">
    <property type="term" value="C:cell-cell junction"/>
    <property type="evidence" value="ECO:0000250"/>
    <property type="project" value="UniProtKB"/>
</dbReference>
<dbReference type="GO" id="GO:0005814">
    <property type="term" value="C:centriole"/>
    <property type="evidence" value="ECO:0000314"/>
    <property type="project" value="UniProtKB"/>
</dbReference>
<dbReference type="GO" id="GO:0005813">
    <property type="term" value="C:centrosome"/>
    <property type="evidence" value="ECO:0000250"/>
    <property type="project" value="UniProtKB"/>
</dbReference>
<dbReference type="GO" id="GO:0036064">
    <property type="term" value="C:ciliary basal body"/>
    <property type="evidence" value="ECO:0000314"/>
    <property type="project" value="UniProtKB"/>
</dbReference>
<dbReference type="GO" id="GO:0005929">
    <property type="term" value="C:cilium"/>
    <property type="evidence" value="ECO:0000314"/>
    <property type="project" value="UniProtKB"/>
</dbReference>
<dbReference type="GO" id="GO:0005737">
    <property type="term" value="C:cytoplasm"/>
    <property type="evidence" value="ECO:0007669"/>
    <property type="project" value="UniProtKB-KW"/>
</dbReference>
<dbReference type="GO" id="GO:0036038">
    <property type="term" value="C:MKS complex"/>
    <property type="evidence" value="ECO:0000314"/>
    <property type="project" value="UniProtKB"/>
</dbReference>
<dbReference type="GO" id="GO:0097730">
    <property type="term" value="C:non-motile cilium"/>
    <property type="evidence" value="ECO:0000314"/>
    <property type="project" value="UniProtKB"/>
</dbReference>
<dbReference type="GO" id="GO:0120206">
    <property type="term" value="C:photoreceptor distal connecting cilium"/>
    <property type="evidence" value="ECO:0000314"/>
    <property type="project" value="MGI"/>
</dbReference>
<dbReference type="GO" id="GO:0001750">
    <property type="term" value="C:photoreceptor outer segment"/>
    <property type="evidence" value="ECO:0000314"/>
    <property type="project" value="MGI"/>
</dbReference>
<dbReference type="GO" id="GO:0007169">
    <property type="term" value="P:cell surface receptor protein tyrosine kinase signaling pathway"/>
    <property type="evidence" value="ECO:0000315"/>
    <property type="project" value="UniProtKB"/>
</dbReference>
<dbReference type="GO" id="GO:0007417">
    <property type="term" value="P:central nervous system development"/>
    <property type="evidence" value="ECO:0000316"/>
    <property type="project" value="UniProtKB"/>
</dbReference>
<dbReference type="GO" id="GO:0060271">
    <property type="term" value="P:cilium assembly"/>
    <property type="evidence" value="ECO:0000315"/>
    <property type="project" value="UniProtKB"/>
</dbReference>
<dbReference type="GO" id="GO:0035844">
    <property type="term" value="P:cloaca development"/>
    <property type="evidence" value="ECO:0000316"/>
    <property type="project" value="UniProtKB"/>
</dbReference>
<dbReference type="GO" id="GO:0042462">
    <property type="term" value="P:eye photoreceptor cell development"/>
    <property type="evidence" value="ECO:0000314"/>
    <property type="project" value="CACAO"/>
</dbReference>
<dbReference type="GO" id="GO:0001947">
    <property type="term" value="P:heart looping"/>
    <property type="evidence" value="ECO:0000316"/>
    <property type="project" value="UniProtKB"/>
</dbReference>
<dbReference type="GO" id="GO:0030902">
    <property type="term" value="P:hindbrain development"/>
    <property type="evidence" value="ECO:0000316"/>
    <property type="project" value="UniProtKB"/>
</dbReference>
<dbReference type="GO" id="GO:0001738">
    <property type="term" value="P:morphogenesis of a polarized epithelium"/>
    <property type="evidence" value="ECO:0000315"/>
    <property type="project" value="UniProtKB"/>
</dbReference>
<dbReference type="GO" id="GO:0043066">
    <property type="term" value="P:negative regulation of apoptotic process"/>
    <property type="evidence" value="ECO:0000315"/>
    <property type="project" value="UniProtKB"/>
</dbReference>
<dbReference type="GO" id="GO:1905515">
    <property type="term" value="P:non-motile cilium assembly"/>
    <property type="evidence" value="ECO:0000315"/>
    <property type="project" value="MGI"/>
</dbReference>
<dbReference type="GO" id="GO:0071599">
    <property type="term" value="P:otic vesicle development"/>
    <property type="evidence" value="ECO:0000316"/>
    <property type="project" value="UniProtKB"/>
</dbReference>
<dbReference type="GO" id="GO:0035845">
    <property type="term" value="P:photoreceptor cell outer segment organization"/>
    <property type="evidence" value="ECO:0000315"/>
    <property type="project" value="MGI"/>
</dbReference>
<dbReference type="GO" id="GO:0010628">
    <property type="term" value="P:positive regulation of gene expression"/>
    <property type="evidence" value="ECO:0000315"/>
    <property type="project" value="MGI"/>
</dbReference>
<dbReference type="GO" id="GO:0045927">
    <property type="term" value="P:positive regulation of growth"/>
    <property type="evidence" value="ECO:0000314"/>
    <property type="project" value="CACAO"/>
</dbReference>
<dbReference type="GO" id="GO:0010976">
    <property type="term" value="P:positive regulation of neuron projection development"/>
    <property type="evidence" value="ECO:0000315"/>
    <property type="project" value="CACAO"/>
</dbReference>
<dbReference type="GO" id="GO:0030862">
    <property type="term" value="P:positive regulation of polarized epithelial cell differentiation"/>
    <property type="evidence" value="ECO:0000315"/>
    <property type="project" value="UniProtKB"/>
</dbReference>
<dbReference type="GO" id="GO:0002092">
    <property type="term" value="P:positive regulation of receptor internalization"/>
    <property type="evidence" value="ECO:0000315"/>
    <property type="project" value="UniProtKB"/>
</dbReference>
<dbReference type="GO" id="GO:0045944">
    <property type="term" value="P:positive regulation of transcription by RNA polymerase II"/>
    <property type="evidence" value="ECO:0000315"/>
    <property type="project" value="UniProtKB"/>
</dbReference>
<dbReference type="GO" id="GO:0039008">
    <property type="term" value="P:pronephric nephron tubule morphogenesis"/>
    <property type="evidence" value="ECO:0000316"/>
    <property type="project" value="UniProtKB"/>
</dbReference>
<dbReference type="GO" id="GO:0008104">
    <property type="term" value="P:protein localization"/>
    <property type="evidence" value="ECO:0000316"/>
    <property type="project" value="UniProtKB"/>
</dbReference>
<dbReference type="GO" id="GO:0033365">
    <property type="term" value="P:protein localization to organelle"/>
    <property type="evidence" value="ECO:0000315"/>
    <property type="project" value="MGI"/>
</dbReference>
<dbReference type="GO" id="GO:0050795">
    <property type="term" value="P:regulation of behavior"/>
    <property type="evidence" value="ECO:0000315"/>
    <property type="project" value="UniProtKB"/>
</dbReference>
<dbReference type="GO" id="GO:0050708">
    <property type="term" value="P:regulation of protein secretion"/>
    <property type="evidence" value="ECO:0000315"/>
    <property type="project" value="CACAO"/>
</dbReference>
<dbReference type="GO" id="GO:0060041">
    <property type="term" value="P:retina development in camera-type eye"/>
    <property type="evidence" value="ECO:0000315"/>
    <property type="project" value="MGI"/>
</dbReference>
<dbReference type="GO" id="GO:0010842">
    <property type="term" value="P:retina layer formation"/>
    <property type="evidence" value="ECO:0000316"/>
    <property type="project" value="UniProtKB"/>
</dbReference>
<dbReference type="GO" id="GO:0046549">
    <property type="term" value="P:retinal cone cell development"/>
    <property type="evidence" value="ECO:0000315"/>
    <property type="project" value="CACAO"/>
</dbReference>
<dbReference type="GO" id="GO:0046548">
    <property type="term" value="P:retinal rod cell development"/>
    <property type="evidence" value="ECO:0000315"/>
    <property type="project" value="CACAO"/>
</dbReference>
<dbReference type="GO" id="GO:0065001">
    <property type="term" value="P:specification of axis polarity"/>
    <property type="evidence" value="ECO:0000316"/>
    <property type="project" value="UniProtKB"/>
</dbReference>
<dbReference type="GO" id="GO:0006903">
    <property type="term" value="P:vesicle targeting"/>
    <property type="evidence" value="ECO:0000315"/>
    <property type="project" value="MGI"/>
</dbReference>
<dbReference type="GO" id="GO:0016192">
    <property type="term" value="P:vesicle-mediated transport"/>
    <property type="evidence" value="ECO:0000315"/>
    <property type="project" value="UniProtKB"/>
</dbReference>
<dbReference type="CDD" id="cd11812">
    <property type="entry name" value="SH3_AHI-1"/>
    <property type="match status" value="1"/>
</dbReference>
<dbReference type="FunFam" id="2.130.10.10:FF:000112">
    <property type="entry name" value="jouberin isoform X2"/>
    <property type="match status" value="1"/>
</dbReference>
<dbReference type="FunFam" id="2.30.30.40:FF:000132">
    <property type="entry name" value="jouberin isoform X2"/>
    <property type="match status" value="1"/>
</dbReference>
<dbReference type="Gene3D" id="2.30.30.40">
    <property type="entry name" value="SH3 Domains"/>
    <property type="match status" value="1"/>
</dbReference>
<dbReference type="Gene3D" id="2.130.10.10">
    <property type="entry name" value="YVTN repeat-like/Quinoprotein amine dehydrogenase"/>
    <property type="match status" value="1"/>
</dbReference>
<dbReference type="InterPro" id="IPR035832">
    <property type="entry name" value="AHI1_SH3"/>
</dbReference>
<dbReference type="InterPro" id="IPR052803">
    <property type="entry name" value="Cilium-Associated_Jouberin"/>
</dbReference>
<dbReference type="InterPro" id="IPR036028">
    <property type="entry name" value="SH3-like_dom_sf"/>
</dbReference>
<dbReference type="InterPro" id="IPR001452">
    <property type="entry name" value="SH3_domain"/>
</dbReference>
<dbReference type="InterPro" id="IPR015943">
    <property type="entry name" value="WD40/YVTN_repeat-like_dom_sf"/>
</dbReference>
<dbReference type="InterPro" id="IPR036322">
    <property type="entry name" value="WD40_repeat_dom_sf"/>
</dbReference>
<dbReference type="InterPro" id="IPR001680">
    <property type="entry name" value="WD40_rpt"/>
</dbReference>
<dbReference type="PANTHER" id="PTHR44499">
    <property type="entry name" value="JOUBERIN"/>
    <property type="match status" value="1"/>
</dbReference>
<dbReference type="PANTHER" id="PTHR44499:SF1">
    <property type="entry name" value="JOUBERIN"/>
    <property type="match status" value="1"/>
</dbReference>
<dbReference type="Pfam" id="PF00018">
    <property type="entry name" value="SH3_1"/>
    <property type="match status" value="1"/>
</dbReference>
<dbReference type="Pfam" id="PF00400">
    <property type="entry name" value="WD40"/>
    <property type="match status" value="4"/>
</dbReference>
<dbReference type="PRINTS" id="PR00452">
    <property type="entry name" value="SH3DOMAIN"/>
</dbReference>
<dbReference type="SMART" id="SM00326">
    <property type="entry name" value="SH3"/>
    <property type="match status" value="1"/>
</dbReference>
<dbReference type="SMART" id="SM00320">
    <property type="entry name" value="WD40"/>
    <property type="match status" value="7"/>
</dbReference>
<dbReference type="SUPFAM" id="SSF50044">
    <property type="entry name" value="SH3-domain"/>
    <property type="match status" value="1"/>
</dbReference>
<dbReference type="SUPFAM" id="SSF50978">
    <property type="entry name" value="WD40 repeat-like"/>
    <property type="match status" value="1"/>
</dbReference>
<dbReference type="PROSITE" id="PS50002">
    <property type="entry name" value="SH3"/>
    <property type="match status" value="1"/>
</dbReference>
<dbReference type="PROSITE" id="PS50082">
    <property type="entry name" value="WD_REPEATS_2"/>
    <property type="match status" value="4"/>
</dbReference>
<dbReference type="PROSITE" id="PS50294">
    <property type="entry name" value="WD_REPEATS_REGION"/>
    <property type="match status" value="1"/>
</dbReference>
<reference key="1">
    <citation type="journal article" date="2002" name="J. Virol.">
        <title>Ahi-1, a novel gene encoding a modular protein with WD40-repeat and SH3 domains, is targeted by the Ahi-1 and Mis-2 provirus integrations.</title>
        <authorList>
            <person name="Jiang X."/>
            <person name="Hanna Z."/>
            <person name="Kaouass M."/>
            <person name="Girard L."/>
            <person name="Jolicoeur P."/>
        </authorList>
    </citation>
    <scope>NUCLEOTIDE SEQUENCE [MRNA] (ISOFORM 1)</scope>
    <scope>TISSUE SPECIFICITY</scope>
    <source>
        <strain>C3H/HeJ</strain>
    </source>
</reference>
<reference key="2">
    <citation type="journal article" date="2004" name="Genome Res.">
        <title>The status, quality, and expansion of the NIH full-length cDNA project: the Mammalian Gene Collection (MGC).</title>
        <authorList>
            <consortium name="The MGC Project Team"/>
        </authorList>
    </citation>
    <scope>NUCLEOTIDE SEQUENCE [LARGE SCALE MRNA] (ISOFORM 2)</scope>
    <source>
        <tissue>Eye</tissue>
    </source>
</reference>
<reference key="3">
    <citation type="journal article" date="2005" name="Science">
        <title>The transcriptional landscape of the mammalian genome.</title>
        <authorList>
            <person name="Carninci P."/>
            <person name="Kasukawa T."/>
            <person name="Katayama S."/>
            <person name="Gough J."/>
            <person name="Frith M.C."/>
            <person name="Maeda N."/>
            <person name="Oyama R."/>
            <person name="Ravasi T."/>
            <person name="Lenhard B."/>
            <person name="Wells C."/>
            <person name="Kodzius R."/>
            <person name="Shimokawa K."/>
            <person name="Bajic V.B."/>
            <person name="Brenner S.E."/>
            <person name="Batalov S."/>
            <person name="Forrest A.R."/>
            <person name="Zavolan M."/>
            <person name="Davis M.J."/>
            <person name="Wilming L.G."/>
            <person name="Aidinis V."/>
            <person name="Allen J.E."/>
            <person name="Ambesi-Impiombato A."/>
            <person name="Apweiler R."/>
            <person name="Aturaliya R.N."/>
            <person name="Bailey T.L."/>
            <person name="Bansal M."/>
            <person name="Baxter L."/>
            <person name="Beisel K.W."/>
            <person name="Bersano T."/>
            <person name="Bono H."/>
            <person name="Chalk A.M."/>
            <person name="Chiu K.P."/>
            <person name="Choudhary V."/>
            <person name="Christoffels A."/>
            <person name="Clutterbuck D.R."/>
            <person name="Crowe M.L."/>
            <person name="Dalla E."/>
            <person name="Dalrymple B.P."/>
            <person name="de Bono B."/>
            <person name="Della Gatta G."/>
            <person name="di Bernardo D."/>
            <person name="Down T."/>
            <person name="Engstrom P."/>
            <person name="Fagiolini M."/>
            <person name="Faulkner G."/>
            <person name="Fletcher C.F."/>
            <person name="Fukushima T."/>
            <person name="Furuno M."/>
            <person name="Futaki S."/>
            <person name="Gariboldi M."/>
            <person name="Georgii-Hemming P."/>
            <person name="Gingeras T.R."/>
            <person name="Gojobori T."/>
            <person name="Green R.E."/>
            <person name="Gustincich S."/>
            <person name="Harbers M."/>
            <person name="Hayashi Y."/>
            <person name="Hensch T.K."/>
            <person name="Hirokawa N."/>
            <person name="Hill D."/>
            <person name="Huminiecki L."/>
            <person name="Iacono M."/>
            <person name="Ikeo K."/>
            <person name="Iwama A."/>
            <person name="Ishikawa T."/>
            <person name="Jakt M."/>
            <person name="Kanapin A."/>
            <person name="Katoh M."/>
            <person name="Kawasawa Y."/>
            <person name="Kelso J."/>
            <person name="Kitamura H."/>
            <person name="Kitano H."/>
            <person name="Kollias G."/>
            <person name="Krishnan S.P."/>
            <person name="Kruger A."/>
            <person name="Kummerfeld S.K."/>
            <person name="Kurochkin I.V."/>
            <person name="Lareau L.F."/>
            <person name="Lazarevic D."/>
            <person name="Lipovich L."/>
            <person name="Liu J."/>
            <person name="Liuni S."/>
            <person name="McWilliam S."/>
            <person name="Madan Babu M."/>
            <person name="Madera M."/>
            <person name="Marchionni L."/>
            <person name="Matsuda H."/>
            <person name="Matsuzawa S."/>
            <person name="Miki H."/>
            <person name="Mignone F."/>
            <person name="Miyake S."/>
            <person name="Morris K."/>
            <person name="Mottagui-Tabar S."/>
            <person name="Mulder N."/>
            <person name="Nakano N."/>
            <person name="Nakauchi H."/>
            <person name="Ng P."/>
            <person name="Nilsson R."/>
            <person name="Nishiguchi S."/>
            <person name="Nishikawa S."/>
            <person name="Nori F."/>
            <person name="Ohara O."/>
            <person name="Okazaki Y."/>
            <person name="Orlando V."/>
            <person name="Pang K.C."/>
            <person name="Pavan W.J."/>
            <person name="Pavesi G."/>
            <person name="Pesole G."/>
            <person name="Petrovsky N."/>
            <person name="Piazza S."/>
            <person name="Reed J."/>
            <person name="Reid J.F."/>
            <person name="Ring B.Z."/>
            <person name="Ringwald M."/>
            <person name="Rost B."/>
            <person name="Ruan Y."/>
            <person name="Salzberg S.L."/>
            <person name="Sandelin A."/>
            <person name="Schneider C."/>
            <person name="Schoenbach C."/>
            <person name="Sekiguchi K."/>
            <person name="Semple C.A."/>
            <person name="Seno S."/>
            <person name="Sessa L."/>
            <person name="Sheng Y."/>
            <person name="Shibata Y."/>
            <person name="Shimada H."/>
            <person name="Shimada K."/>
            <person name="Silva D."/>
            <person name="Sinclair B."/>
            <person name="Sperling S."/>
            <person name="Stupka E."/>
            <person name="Sugiura K."/>
            <person name="Sultana R."/>
            <person name="Takenaka Y."/>
            <person name="Taki K."/>
            <person name="Tammoja K."/>
            <person name="Tan S.L."/>
            <person name="Tang S."/>
            <person name="Taylor M.S."/>
            <person name="Tegner J."/>
            <person name="Teichmann S.A."/>
            <person name="Ueda H.R."/>
            <person name="van Nimwegen E."/>
            <person name="Verardo R."/>
            <person name="Wei C.L."/>
            <person name="Yagi K."/>
            <person name="Yamanishi H."/>
            <person name="Zabarovsky E."/>
            <person name="Zhu S."/>
            <person name="Zimmer A."/>
            <person name="Hide W."/>
            <person name="Bult C."/>
            <person name="Grimmond S.M."/>
            <person name="Teasdale R.D."/>
            <person name="Liu E.T."/>
            <person name="Brusic V."/>
            <person name="Quackenbush J."/>
            <person name="Wahlestedt C."/>
            <person name="Mattick J.S."/>
            <person name="Hume D.A."/>
            <person name="Kai C."/>
            <person name="Sasaki D."/>
            <person name="Tomaru Y."/>
            <person name="Fukuda S."/>
            <person name="Kanamori-Katayama M."/>
            <person name="Suzuki M."/>
            <person name="Aoki J."/>
            <person name="Arakawa T."/>
            <person name="Iida J."/>
            <person name="Imamura K."/>
            <person name="Itoh M."/>
            <person name="Kato T."/>
            <person name="Kawaji H."/>
            <person name="Kawagashira N."/>
            <person name="Kawashima T."/>
            <person name="Kojima M."/>
            <person name="Kondo S."/>
            <person name="Konno H."/>
            <person name="Nakano K."/>
            <person name="Ninomiya N."/>
            <person name="Nishio T."/>
            <person name="Okada M."/>
            <person name="Plessy C."/>
            <person name="Shibata K."/>
            <person name="Shiraki T."/>
            <person name="Suzuki S."/>
            <person name="Tagami M."/>
            <person name="Waki K."/>
            <person name="Watahiki A."/>
            <person name="Okamura-Oho Y."/>
            <person name="Suzuki H."/>
            <person name="Kawai J."/>
            <person name="Hayashizaki Y."/>
        </authorList>
    </citation>
    <scope>NUCLEOTIDE SEQUENCE [LARGE SCALE MRNA] OF 1-322</scope>
    <source>
        <strain>C57BL/6J</strain>
        <tissue>Testis</tissue>
    </source>
</reference>
<reference key="4">
    <citation type="journal article" date="2004" name="Am. J. Hum. Genet.">
        <title>Mutations in the AHI1 gene, encoding jouberin, cause Joubert syndrome with cortical polymicrogyria.</title>
        <authorList>
            <person name="Dixon-Salazar T."/>
            <person name="Silhavy J.L."/>
            <person name="Marsh S.E."/>
            <person name="Louie C.M."/>
            <person name="Scott L.C."/>
            <person name="Gururaj A."/>
            <person name="Al-Gazali L."/>
            <person name="Al-Tawari A.A."/>
            <person name="Kayserili H."/>
            <person name="Sztriha L."/>
            <person name="Gleeson J.G."/>
        </authorList>
    </citation>
    <scope>TISSUE SPECIFICITY</scope>
    <scope>DEVELOPMENTAL STAGE</scope>
</reference>
<reference key="5">
    <citation type="journal article" date="2008" name="Kidney Int.">
        <title>Jouberin localizes to collecting ducts and interacts with nephrocystin-1.</title>
        <authorList>
            <person name="Eley L."/>
            <person name="Gabrielides C."/>
            <person name="Adams M."/>
            <person name="Johnson C.A."/>
            <person name="Hildebrandt F."/>
            <person name="Sayer J.A."/>
        </authorList>
    </citation>
    <scope>INTERACTION WITH NPHP1</scope>
    <scope>SUBCELLULAR LOCATION</scope>
</reference>
<reference key="6">
    <citation type="journal article" date="2009" name="Hum. Mol. Genet.">
        <title>Ahi1, whose human ortholog is mutated in Joubert syndrome, is required for Rab8a localization, ciliogenesis and vesicle trafficking.</title>
        <authorList>
            <person name="Hsiao Y.C."/>
            <person name="Tong Z.J."/>
            <person name="Westfall J.E."/>
            <person name="Ault J.G."/>
            <person name="Page-McCaw P.S."/>
            <person name="Ferland R.J."/>
        </authorList>
    </citation>
    <scope>FUNCTION</scope>
    <scope>INTERACTION WITH RAB8A</scope>
    <scope>SUBCELLULAR LOCATION</scope>
</reference>
<reference key="7">
    <citation type="journal article" date="2010" name="Cell">
        <title>A tissue-specific atlas of mouse protein phosphorylation and expression.</title>
        <authorList>
            <person name="Huttlin E.L."/>
            <person name="Jedrychowski M.P."/>
            <person name="Elias J.E."/>
            <person name="Goswami T."/>
            <person name="Rad R."/>
            <person name="Beausoleil S.A."/>
            <person name="Villen J."/>
            <person name="Haas W."/>
            <person name="Sowa M.E."/>
            <person name="Gygi S.P."/>
        </authorList>
    </citation>
    <scope>IDENTIFICATION BY MASS SPECTROMETRY [LARGE SCALE ANALYSIS]</scope>
    <source>
        <tissue>Brain</tissue>
    </source>
</reference>
<reference key="8">
    <citation type="journal article" date="2011" name="Cell">
        <title>Mapping the NPHP-JBTS-MKS protein network reveals ciliopathy disease genes and pathways.</title>
        <authorList>
            <person name="Sang L."/>
            <person name="Miller J.J."/>
            <person name="Corbit K.C."/>
            <person name="Giles R.H."/>
            <person name="Brauer M.J."/>
            <person name="Otto E.A."/>
            <person name="Baye L.M."/>
            <person name="Wen X."/>
            <person name="Scales S.J."/>
            <person name="Kwong M."/>
            <person name="Huntzicker E.G."/>
            <person name="Sfakianos M.K."/>
            <person name="Sandoval W."/>
            <person name="Bazan J.F."/>
            <person name="Kulkarni P."/>
            <person name="Garcia-Gonzalo F.R."/>
            <person name="Seol A.D."/>
            <person name="O'Toole J.F."/>
            <person name="Held S."/>
            <person name="Reutter H.M."/>
            <person name="Lane W.S."/>
            <person name="Rafiq M.A."/>
            <person name="Noor A."/>
            <person name="Ansar M."/>
            <person name="Devi A.R."/>
            <person name="Sheffield V.C."/>
            <person name="Slusarski D.C."/>
            <person name="Vincent J.B."/>
            <person name="Doherty D.A."/>
            <person name="Hildebrandt F."/>
            <person name="Reiter J.F."/>
            <person name="Jackson P.K."/>
        </authorList>
    </citation>
    <scope>INTERACTION WITH MKS1</scope>
</reference>
<reference key="9">
    <citation type="journal article" date="2011" name="Nat. Med.">
        <title>Defective Wnt-dependent cerebellar midline fusion in a mouse model of Joubert syndrome.</title>
        <authorList>
            <person name="Lancaster M.A."/>
            <person name="Gopal D.J."/>
            <person name="Kim J."/>
            <person name="Saleem S.N."/>
            <person name="Silhavy J.L."/>
            <person name="Louie C.M."/>
            <person name="Thacker B.E."/>
            <person name="Williams Y."/>
            <person name="Zaki M.S."/>
            <person name="Gleeson J.G."/>
        </authorList>
    </citation>
    <scope>FUNCTION</scope>
    <scope>SUBCELLULAR LOCATION</scope>
    <scope>DISRUPTION PHENOTYPE</scope>
</reference>
<reference key="10">
    <citation type="journal article" date="2012" name="Nat. Cell Biol.">
        <title>A ciliopathy complex at the transition zone protects the cilia as a privileged membrane domain.</title>
        <authorList>
            <person name="Chih B."/>
            <person name="Liu P."/>
            <person name="Chinn Y."/>
            <person name="Chalouni C."/>
            <person name="Komuves L.G."/>
            <person name="Hass P.E."/>
            <person name="Sandoval W."/>
            <person name="Peterson A.S."/>
        </authorList>
    </citation>
    <scope>FUNCTION</scope>
    <scope>IDENTIFICATION IN THE TECTONIC-LIKE COMPLEX</scope>
</reference>
<reference key="11">
    <citation type="journal article" date="2013" name="J. Neurosci.">
        <title>Loss of Ahi1 affects early development by impairing BM88/Cend1-mediated neuronal differentiation.</title>
        <authorList>
            <person name="Weng L."/>
            <person name="Lin Y.F."/>
            <person name="Li A.L."/>
            <person name="Wang C.E."/>
            <person name="Yan S."/>
            <person name="Sun M."/>
            <person name="Gaertig M.A."/>
            <person name="Mitha N."/>
            <person name="Kosaka J."/>
            <person name="Wakabayashi T."/>
            <person name="Xu X."/>
            <person name="Tang B."/>
            <person name="Li S."/>
            <person name="Li X.J."/>
        </authorList>
    </citation>
    <scope>FUNCTION</scope>
    <scope>INTERACTION WITH HAP1 AND CEND1</scope>
    <scope>DISRUPTION PHENOTYPE</scope>
</reference>
<reference key="12">
    <citation type="journal article" date="2018" name="J. Cell Biol.">
        <title>SPATA7 maintains a novel photoreceptor-specific zone in the distal connecting cilium.</title>
        <authorList>
            <person name="Dharmat R."/>
            <person name="Eblimit A."/>
            <person name="Robichaux M.A."/>
            <person name="Zhang Z."/>
            <person name="Nguyen T.T."/>
            <person name="Jung S.Y."/>
            <person name="He F."/>
            <person name="Jain A."/>
            <person name="Li Y."/>
            <person name="Qin J."/>
            <person name="Overbeek P."/>
            <person name="Roepman R."/>
            <person name="Mardon G."/>
            <person name="Wensel T.G."/>
            <person name="Chen R."/>
        </authorList>
    </citation>
    <scope>INTERACTION WITH SPATA7</scope>
    <scope>SUBCELLULAR LOCATION</scope>
    <scope>TISSUE SPECIFICITY</scope>
</reference>
<gene>
    <name type="primary">Ahi1</name>
</gene>